<keyword id="KW-1064">Adaptive immunity</keyword>
<keyword id="KW-1003">Cell membrane</keyword>
<keyword id="KW-1015">Disulfide bond</keyword>
<keyword id="KW-0967">Endosome</keyword>
<keyword id="KW-0325">Glycoprotein</keyword>
<keyword id="KW-0391">Immunity</keyword>
<keyword id="KW-0393">Immunoglobulin domain</keyword>
<keyword id="KW-0458">Lysosome</keyword>
<keyword id="KW-0472">Membrane</keyword>
<keyword id="KW-1185">Reference proteome</keyword>
<keyword id="KW-0812">Transmembrane</keyword>
<keyword id="KW-1133">Transmembrane helix</keyword>
<reference key="1">
    <citation type="journal article" date="1996" name="Immunogenetics">
        <title>The sheep CD1 gene family contains at least four CD1B homologues.</title>
        <authorList>
            <person name="Ferguson E.E."/>
            <person name="Dutia B.M."/>
            <person name="Hein W.R."/>
            <person name="Hopkins J."/>
        </authorList>
    </citation>
    <scope>NUCLEOTIDE SEQUENCE [MRNA]</scope>
    <source>
        <tissue>Fetal thymocyte</tissue>
    </source>
</reference>
<feature type="chain" id="PRO_0000072670" description="T-cell surface glycoprotein CD1b-3">
    <location>
        <begin position="1" status="less than"/>
        <end position="232"/>
    </location>
</feature>
<feature type="topological domain" description="Extracellular" evidence="2">
    <location>
        <begin position="1" status="less than"/>
        <end position="201"/>
    </location>
</feature>
<feature type="transmembrane region" description="Helical" evidence="2">
    <location>
        <begin position="202"/>
        <end position="222"/>
    </location>
</feature>
<feature type="topological domain" description="Cytoplasmic" evidence="2">
    <location>
        <begin position="223"/>
        <end position="232"/>
    </location>
</feature>
<feature type="domain" description="Ig-like">
    <location>
        <begin position="84"/>
        <end position="194"/>
    </location>
</feature>
<feature type="glycosylation site" description="N-linked (GlcNAc...) asparagine" evidence="2">
    <location>
        <position position="45"/>
    </location>
</feature>
<feature type="disulfide bond" evidence="3">
    <location>
        <begin position="19"/>
        <end position="83"/>
    </location>
</feature>
<feature type="disulfide bond" evidence="3">
    <location>
        <begin position="48"/>
        <end position="62"/>
    </location>
</feature>
<feature type="disulfide bond" evidence="3">
    <location>
        <begin position="123"/>
        <end position="178"/>
    </location>
</feature>
<feature type="non-terminal residue">
    <location>
        <position position="1"/>
    </location>
</feature>
<organism>
    <name type="scientific">Ovis aries</name>
    <name type="common">Sheep</name>
    <dbReference type="NCBI Taxonomy" id="9940"/>
    <lineage>
        <taxon>Eukaryota</taxon>
        <taxon>Metazoa</taxon>
        <taxon>Chordata</taxon>
        <taxon>Craniata</taxon>
        <taxon>Vertebrata</taxon>
        <taxon>Euteleostomi</taxon>
        <taxon>Mammalia</taxon>
        <taxon>Eutheria</taxon>
        <taxon>Laurasiatheria</taxon>
        <taxon>Artiodactyla</taxon>
        <taxon>Ruminantia</taxon>
        <taxon>Pecora</taxon>
        <taxon>Bovidae</taxon>
        <taxon>Caprinae</taxon>
        <taxon>Ovis</taxon>
    </lineage>
</organism>
<comment type="function">
    <text evidence="1">Antigen-presenting protein that binds self and non-self lipid and glycolipid antigens and presents them to T-cell receptors on natural killer T-cells.</text>
</comment>
<comment type="subunit">
    <text evidence="1">Heterodimer with B2M (beta-2-microglobulin). Interacts with saposin C (By similarity).</text>
</comment>
<comment type="subcellular location">
    <subcellularLocation>
        <location evidence="1">Cell membrane</location>
        <topology evidence="1">Single-pass type I membrane protein</topology>
    </subcellularLocation>
    <subcellularLocation>
        <location evidence="1">Endosome membrane</location>
    </subcellularLocation>
    <subcellularLocation>
        <location evidence="1">Lysosome membrane</location>
    </subcellularLocation>
    <text evidence="1">Subject to intracellular trafficking between the cell membrane, endosomes and lysosomes. Localizes to cell surface lipid rafts (By similarity).</text>
</comment>
<comment type="miscellaneous">
    <text evidence="1">During protein synthesis and maturation, CD1 family members bind endogenous lipids that are replaced by lipid or glycolipid antigens when the proteins are internalized and pass through endosomes or lysosomes, before trafficking back to the cell surface. Interaction with saposin C is required for the loading of bacterial lipid antigens onto CD1B in the lysosome (By similarity).</text>
</comment>
<proteinExistence type="evidence at transcript level"/>
<evidence type="ECO:0000250" key="1"/>
<evidence type="ECO:0000255" key="2"/>
<evidence type="ECO:0000255" key="3">
    <source>
        <dbReference type="PROSITE-ProRule" id="PRU00114"/>
    </source>
</evidence>
<protein>
    <recommendedName>
        <fullName>T-cell surface glycoprotein CD1b-3</fullName>
    </recommendedName>
    <alternativeName>
        <fullName>sCD1-T10</fullName>
    </alternativeName>
    <cdAntigenName>CD1b-3</cdAntigenName>
</protein>
<dbReference type="EMBL" id="X90567">
    <property type="protein sequence ID" value="CAA62187.1"/>
    <property type="molecule type" value="mRNA"/>
</dbReference>
<dbReference type="PIR" id="S58353">
    <property type="entry name" value="S58353"/>
</dbReference>
<dbReference type="SMR" id="P80943"/>
<dbReference type="PaxDb" id="9940-ENSOARP00000007813"/>
<dbReference type="eggNOG" id="ENOG502SJH6">
    <property type="taxonomic scope" value="Eukaryota"/>
</dbReference>
<dbReference type="Proteomes" id="UP000002356">
    <property type="component" value="Unplaced"/>
</dbReference>
<dbReference type="GO" id="GO:0010008">
    <property type="term" value="C:endosome membrane"/>
    <property type="evidence" value="ECO:0007669"/>
    <property type="project" value="UniProtKB-SubCell"/>
</dbReference>
<dbReference type="GO" id="GO:0009897">
    <property type="term" value="C:external side of plasma membrane"/>
    <property type="evidence" value="ECO:0007669"/>
    <property type="project" value="TreeGrafter"/>
</dbReference>
<dbReference type="GO" id="GO:0005615">
    <property type="term" value="C:extracellular space"/>
    <property type="evidence" value="ECO:0007669"/>
    <property type="project" value="TreeGrafter"/>
</dbReference>
<dbReference type="GO" id="GO:0005765">
    <property type="term" value="C:lysosomal membrane"/>
    <property type="evidence" value="ECO:0007669"/>
    <property type="project" value="UniProtKB-SubCell"/>
</dbReference>
<dbReference type="GO" id="GO:0030883">
    <property type="term" value="F:endogenous lipid antigen binding"/>
    <property type="evidence" value="ECO:0007669"/>
    <property type="project" value="TreeGrafter"/>
</dbReference>
<dbReference type="GO" id="GO:0030884">
    <property type="term" value="F:exogenous lipid antigen binding"/>
    <property type="evidence" value="ECO:0007669"/>
    <property type="project" value="TreeGrafter"/>
</dbReference>
<dbReference type="GO" id="GO:0071723">
    <property type="term" value="F:lipopeptide binding"/>
    <property type="evidence" value="ECO:0007669"/>
    <property type="project" value="TreeGrafter"/>
</dbReference>
<dbReference type="GO" id="GO:0002250">
    <property type="term" value="P:adaptive immune response"/>
    <property type="evidence" value="ECO:0007669"/>
    <property type="project" value="UniProtKB-KW"/>
</dbReference>
<dbReference type="GO" id="GO:0048006">
    <property type="term" value="P:antigen processing and presentation, endogenous lipid antigen via MHC class Ib"/>
    <property type="evidence" value="ECO:0007669"/>
    <property type="project" value="TreeGrafter"/>
</dbReference>
<dbReference type="GO" id="GO:0048007">
    <property type="term" value="P:antigen processing and presentation, exogenous lipid antigen via MHC class Ib"/>
    <property type="evidence" value="ECO:0007669"/>
    <property type="project" value="TreeGrafter"/>
</dbReference>
<dbReference type="GO" id="GO:0001916">
    <property type="term" value="P:positive regulation of T cell mediated cytotoxicity"/>
    <property type="evidence" value="ECO:0007669"/>
    <property type="project" value="TreeGrafter"/>
</dbReference>
<dbReference type="CDD" id="cd21029">
    <property type="entry name" value="IgC1_CD1"/>
    <property type="match status" value="1"/>
</dbReference>
<dbReference type="FunFam" id="2.60.40.10:FF:000254">
    <property type="entry name" value="Antigen-presenting glycoprotein CD1d1"/>
    <property type="match status" value="1"/>
</dbReference>
<dbReference type="Gene3D" id="2.60.40.10">
    <property type="entry name" value="Immunoglobulins"/>
    <property type="match status" value="1"/>
</dbReference>
<dbReference type="Gene3D" id="3.30.500.10">
    <property type="entry name" value="MHC class I-like antigen recognition-like"/>
    <property type="match status" value="1"/>
</dbReference>
<dbReference type="InterPro" id="IPR007110">
    <property type="entry name" value="Ig-like_dom"/>
</dbReference>
<dbReference type="InterPro" id="IPR036179">
    <property type="entry name" value="Ig-like_dom_sf"/>
</dbReference>
<dbReference type="InterPro" id="IPR013783">
    <property type="entry name" value="Ig-like_fold"/>
</dbReference>
<dbReference type="InterPro" id="IPR003597">
    <property type="entry name" value="Ig_C1-set"/>
</dbReference>
<dbReference type="InterPro" id="IPR050208">
    <property type="entry name" value="MHC_class-I_related"/>
</dbReference>
<dbReference type="InterPro" id="IPR011161">
    <property type="entry name" value="MHC_I-like_Ag-recog"/>
</dbReference>
<dbReference type="InterPro" id="IPR037055">
    <property type="entry name" value="MHC_I-like_Ag-recog_sf"/>
</dbReference>
<dbReference type="InterPro" id="IPR011162">
    <property type="entry name" value="MHC_I/II-like_Ag-recog"/>
</dbReference>
<dbReference type="PANTHER" id="PTHR16675">
    <property type="entry name" value="MHC CLASS I-RELATED"/>
    <property type="match status" value="1"/>
</dbReference>
<dbReference type="PANTHER" id="PTHR16675:SF130">
    <property type="entry name" value="T-CELL SURFACE GLYCOPROTEIN CD1B"/>
    <property type="match status" value="1"/>
</dbReference>
<dbReference type="Pfam" id="PF07654">
    <property type="entry name" value="C1-set"/>
    <property type="match status" value="1"/>
</dbReference>
<dbReference type="Pfam" id="PF16497">
    <property type="entry name" value="MHC_I_3"/>
    <property type="match status" value="1"/>
</dbReference>
<dbReference type="SMART" id="SM00407">
    <property type="entry name" value="IGc1"/>
    <property type="match status" value="1"/>
</dbReference>
<dbReference type="SUPFAM" id="SSF48726">
    <property type="entry name" value="Immunoglobulin"/>
    <property type="match status" value="1"/>
</dbReference>
<dbReference type="SUPFAM" id="SSF54452">
    <property type="entry name" value="MHC antigen-recognition domain"/>
    <property type="match status" value="1"/>
</dbReference>
<dbReference type="PROSITE" id="PS50835">
    <property type="entry name" value="IG_LIKE"/>
    <property type="match status" value="1"/>
</dbReference>
<accession>P80943</accession>
<name>CD1B3_SHEEP</name>
<sequence length="232" mass="26023">GLQEFQFEYPFVIQGIAGCELHSGKAIQSFLRAGFEGLDFVSIENHSCVPEPEGGSEAQWFCVFITQYQGILAIIDRLLSKTCPRYLLGVLDAGKAELHRQVKPEAWLSSGPTPGPGRLLLVCHVSGFYPKPVRVMWMRGEQEQPGTQQGNIILNADWTWYLRVTLDVAAGEAAGLSCRVKHSSLGDQDIILYWGHPMYIGLIFVAIIVPSLILLICLALWFWRRWSYQTVL</sequence>